<feature type="peptide" id="PRO_0000044781" description="Tyrosinase inhibitor">
    <location>
        <begin position="1"/>
        <end position="38"/>
    </location>
</feature>
<feature type="modified residue" description="3',4'-dihydroxyphenylalanine" evidence="3">
    <location>
        <position position="32"/>
    </location>
</feature>
<feature type="disulfide bond" evidence="1">
    <location>
        <begin position="11"/>
        <end position="25"/>
    </location>
</feature>
<feature type="disulfide bond" evidence="1">
    <location>
        <begin position="18"/>
        <end position="29"/>
    </location>
</feature>
<feature type="disulfide bond" evidence="1">
    <location>
        <begin position="24"/>
        <end position="36"/>
    </location>
</feature>
<evidence type="ECO:0000269" key="1">
    <source>
    </source>
</evidence>
<evidence type="ECO:0000269" key="2">
    <source>
    </source>
</evidence>
<evidence type="ECO:0000269" key="3">
    <source>
    </source>
</evidence>
<proteinExistence type="evidence at protein level"/>
<reference key="1">
    <citation type="journal article" date="1995" name="Proc. Natl. Acad. Sci. U.S.A.">
        <title>Primary structure of a potent endogenous dopa-containing inhibitor of phenol oxidase from Musca domestica.</title>
        <authorList>
            <person name="Daquinag A.C."/>
            <person name="Nakamura S."/>
            <person name="Takao T."/>
            <person name="Shimonishi Y."/>
            <person name="Tsukamoto T."/>
        </authorList>
    </citation>
    <scope>PROTEIN SEQUENCE</scope>
    <scope>CHARACTERIZATION</scope>
    <scope>HYDROXYLATION AT TYR-32</scope>
    <scope>MASS SPECTROMETRY</scope>
    <source>
        <tissue>Hemolymph</tissue>
    </source>
</reference>
<reference key="2">
    <citation type="journal article" date="1992" name="Biochem. Biophys. Res. Commun.">
        <title>Identification and isolation of endogenous insect phenoloxidase inhibitors.</title>
        <authorList>
            <person name="Tsukamoto T."/>
            <person name="Ichimaru Y."/>
            <person name="Kanegae N."/>
            <person name="Watanabe K."/>
            <person name="Yamaura I."/>
            <person name="Katsura Y."/>
            <person name="Funatsu M."/>
        </authorList>
    </citation>
    <scope>PROTEIN SEQUENCE OF 6-9</scope>
    <scope>CHARACTERIZATION</scope>
    <scope>DEVELOPMENTAL STAGE</scope>
    <source>
        <tissue>Hemolymph</tissue>
    </source>
</reference>
<reference key="3">
    <citation type="journal article" date="1999" name="Biochemistry">
        <title>A novel endogenous inhibitor of phenoloxidase from Musca domestica has a cystine motif commonly found in snail and spider toxins.</title>
        <authorList>
            <person name="Daquinag A.C."/>
            <person name="Sato T."/>
            <person name="Koda H."/>
            <person name="Takao T."/>
            <person name="Fukuda M."/>
            <person name="Shimonishi Y."/>
            <person name="Tsukamoto T."/>
        </authorList>
    </citation>
    <scope>SYNTHESIS</scope>
    <scope>DISULFIDE BONDS</scope>
</reference>
<comment type="function">
    <text>Potent reversible, competitive inhibitor of tyrosinase (phenol oxidase) in the nanomolar range.</text>
</comment>
<comment type="subunit">
    <text>Monomer.</text>
</comment>
<comment type="subcellular location">
    <subcellularLocation>
        <location>Secreted</location>
    </subcellularLocation>
</comment>
<comment type="developmental stage">
    <text evidence="2">POI activity increases throughout pupariation, and is highest in final instar pupae. No activity in newly emerged adults.</text>
</comment>
<comment type="domain">
    <text>The presence of a 'disulfide through disulfide knot' structurally defines this protein as a knottin.</text>
</comment>
<comment type="PTM">
    <text>Contains L-DOPA (3',4'-dihydroxyphenylalanine).</text>
</comment>
<comment type="mass spectrometry" mass="4213.1" error="0.2" method="Electrospray" evidence="3"/>
<name>POI_MUSDO</name>
<sequence length="38" mass="4204">AVTDNEIVPQCLANGSKCYSHDVCCTKRCHNYAKKCVT</sequence>
<organism>
    <name type="scientific">Musca domestica</name>
    <name type="common">House fly</name>
    <dbReference type="NCBI Taxonomy" id="7370"/>
    <lineage>
        <taxon>Eukaryota</taxon>
        <taxon>Metazoa</taxon>
        <taxon>Ecdysozoa</taxon>
        <taxon>Arthropoda</taxon>
        <taxon>Hexapoda</taxon>
        <taxon>Insecta</taxon>
        <taxon>Pterygota</taxon>
        <taxon>Neoptera</taxon>
        <taxon>Endopterygota</taxon>
        <taxon>Diptera</taxon>
        <taxon>Brachycera</taxon>
        <taxon>Muscomorpha</taxon>
        <taxon>Muscoidea</taxon>
        <taxon>Muscidae</taxon>
        <taxon>Musca</taxon>
    </lineage>
</organism>
<protein>
    <recommendedName>
        <fullName>Tyrosinase inhibitor</fullName>
    </recommendedName>
    <alternativeName>
        <fullName>Phenol oxidase inhibitor</fullName>
    </alternativeName>
    <alternativeName>
        <fullName>Phenoloxidase inhibitor</fullName>
        <shortName>POI</shortName>
    </alternativeName>
</protein>
<dbReference type="SMR" id="P81765"/>
<dbReference type="Proteomes" id="UP000694905">
    <property type="component" value="Unplaced"/>
</dbReference>
<dbReference type="GO" id="GO:0005576">
    <property type="term" value="C:extracellular region"/>
    <property type="evidence" value="ECO:0007669"/>
    <property type="project" value="UniProtKB-SubCell"/>
</dbReference>
<keyword id="KW-0903">Direct protein sequencing</keyword>
<keyword id="KW-1015">Disulfide bond</keyword>
<keyword id="KW-0379">Hydroxylation</keyword>
<keyword id="KW-0960">Knottin</keyword>
<keyword id="KW-1185">Reference proteome</keyword>
<keyword id="KW-0964">Secreted</keyword>
<accession>P81765</accession>